<accession>P0CY01</accession>
<accession>D6VTG3</accession>
<accession>P43536</accession>
<accession>Q547K4</accession>
<accession>Q8TGK2</accession>
<gene>
    <name type="ordered locus">YLL067W-A</name>
</gene>
<comment type="subcellular location">
    <subcellularLocation>
        <location evidence="2">Membrane</location>
        <topology evidence="2">Multi-pass membrane protein</topology>
    </subcellularLocation>
</comment>
<comment type="similarity">
    <text evidence="2">Belongs to the UPF0479 family.</text>
</comment>
<organism>
    <name type="scientific">Saccharomyces cerevisiae (strain ATCC 204508 / S288c)</name>
    <name type="common">Baker's yeast</name>
    <dbReference type="NCBI Taxonomy" id="559292"/>
    <lineage>
        <taxon>Eukaryota</taxon>
        <taxon>Fungi</taxon>
        <taxon>Dikarya</taxon>
        <taxon>Ascomycota</taxon>
        <taxon>Saccharomycotina</taxon>
        <taxon>Saccharomycetes</taxon>
        <taxon>Saccharomycetales</taxon>
        <taxon>Saccharomycetaceae</taxon>
        <taxon>Saccharomyces</taxon>
    </lineage>
</organism>
<evidence type="ECO:0000255" key="1"/>
<evidence type="ECO:0000305" key="2"/>
<feature type="chain" id="PRO_0000410457" description="UPF0479 membrane protein YLL067W-A">
    <location>
        <begin position="1"/>
        <end position="160"/>
    </location>
</feature>
<feature type="transmembrane region" description="Helical" evidence="1">
    <location>
        <begin position="39"/>
        <end position="59"/>
    </location>
</feature>
<feature type="transmembrane region" description="Helical" evidence="1">
    <location>
        <begin position="136"/>
        <end position="156"/>
    </location>
</feature>
<name>YL67A_YEAST</name>
<proteinExistence type="inferred from homology"/>
<reference key="1">
    <citation type="journal article" date="1997" name="Nature">
        <title>The nucleotide sequence of Saccharomyces cerevisiae chromosome XII.</title>
        <authorList>
            <person name="Johnston M."/>
            <person name="Hillier L.W."/>
            <person name="Riles L."/>
            <person name="Albermann K."/>
            <person name="Andre B."/>
            <person name="Ansorge W."/>
            <person name="Benes V."/>
            <person name="Brueckner M."/>
            <person name="Delius H."/>
            <person name="Dubois E."/>
            <person name="Duesterhoeft A."/>
            <person name="Entian K.-D."/>
            <person name="Floeth M."/>
            <person name="Goffeau A."/>
            <person name="Hebling U."/>
            <person name="Heumann K."/>
            <person name="Heuss-Neitzel D."/>
            <person name="Hilbert H."/>
            <person name="Hilger F."/>
            <person name="Kleine K."/>
            <person name="Koetter P."/>
            <person name="Louis E.J."/>
            <person name="Messenguy F."/>
            <person name="Mewes H.-W."/>
            <person name="Miosga T."/>
            <person name="Moestl D."/>
            <person name="Mueller-Auer S."/>
            <person name="Nentwich U."/>
            <person name="Obermaier B."/>
            <person name="Piravandi E."/>
            <person name="Pohl T.M."/>
            <person name="Portetelle D."/>
            <person name="Purnelle B."/>
            <person name="Rechmann S."/>
            <person name="Rieger M."/>
            <person name="Rinke M."/>
            <person name="Rose M."/>
            <person name="Scharfe M."/>
            <person name="Scherens B."/>
            <person name="Scholler P."/>
            <person name="Schwager C."/>
            <person name="Schwarz S."/>
            <person name="Underwood A.P."/>
            <person name="Urrestarazu L.A."/>
            <person name="Vandenbol M."/>
            <person name="Verhasselt P."/>
            <person name="Vierendeels F."/>
            <person name="Voet M."/>
            <person name="Volckaert G."/>
            <person name="Voss H."/>
            <person name="Wambutt R."/>
            <person name="Wedler E."/>
            <person name="Wedler H."/>
            <person name="Zimmermann F.K."/>
            <person name="Zollner A."/>
            <person name="Hani J."/>
            <person name="Hoheisel J.D."/>
        </authorList>
    </citation>
    <scope>NUCLEOTIDE SEQUENCE [LARGE SCALE GENOMIC DNA]</scope>
    <source>
        <strain>ATCC 204508 / S288c</strain>
    </source>
</reference>
<reference key="2">
    <citation type="journal article" date="2014" name="G3 (Bethesda)">
        <title>The reference genome sequence of Saccharomyces cerevisiae: Then and now.</title>
        <authorList>
            <person name="Engel S.R."/>
            <person name="Dietrich F.S."/>
            <person name="Fisk D.G."/>
            <person name="Binkley G."/>
            <person name="Balakrishnan R."/>
            <person name="Costanzo M.C."/>
            <person name="Dwight S.S."/>
            <person name="Hitz B.C."/>
            <person name="Karra K."/>
            <person name="Nash R.S."/>
            <person name="Weng S."/>
            <person name="Wong E.D."/>
            <person name="Lloyd P."/>
            <person name="Skrzypek M.S."/>
            <person name="Miyasato S.R."/>
            <person name="Simison M."/>
            <person name="Cherry J.M."/>
        </authorList>
    </citation>
    <scope>GENOME REANNOTATION</scope>
    <source>
        <strain>ATCC 204508 / S288c</strain>
    </source>
</reference>
<reference key="3">
    <citation type="journal article" date="2002" name="Nat. Biotechnol.">
        <title>An integrated approach for finding overlooked genes in yeast.</title>
        <authorList>
            <person name="Kumar A."/>
            <person name="Harrison P.M."/>
            <person name="Cheung K.-H."/>
            <person name="Lan N."/>
            <person name="Echols N."/>
            <person name="Bertone P."/>
            <person name="Miller P."/>
            <person name="Gerstein M.B."/>
            <person name="Snyder M."/>
        </authorList>
    </citation>
    <scope>NUCLEOTIDE SEQUENCE [GENOMIC DNA]</scope>
</reference>
<sequence length="160" mass="18593">MMPAKLQLDVLRTLQSSARHGTQTLKNSNFLERFHKDRIVFCLPFFPALFLVPVQKVLQHLCLRFTQVAPYFIIQLFDLPSRHAENLAPLLASCRIQYTNCFSSSSNGQVPSIISLYLRVDLSPFYAKKFQIPYRVPMIWLDVFQVFFVFLVISQHSLHS</sequence>
<protein>
    <recommendedName>
        <fullName>UPF0479 membrane protein YLL067W-A</fullName>
    </recommendedName>
</protein>
<keyword id="KW-0472">Membrane</keyword>
<keyword id="KW-1185">Reference proteome</keyword>
<keyword id="KW-0812">Transmembrane</keyword>
<keyword id="KW-1133">Transmembrane helix</keyword>
<dbReference type="EMBL" id="Z73172">
    <property type="status" value="NOT_ANNOTATED_CDS"/>
    <property type="molecule type" value="Genomic_DNA"/>
</dbReference>
<dbReference type="EMBL" id="Z47973">
    <property type="status" value="NOT_ANNOTATED_CDS"/>
    <property type="molecule type" value="Genomic_DNA"/>
</dbReference>
<dbReference type="EMBL" id="AF480005">
    <property type="protein sequence ID" value="AAL79318.1"/>
    <property type="molecule type" value="Genomic_DNA"/>
</dbReference>
<dbReference type="EMBL" id="BK006945">
    <property type="status" value="NOT_ANNOTATED_CDS"/>
    <property type="molecule type" value="Genomic_DNA"/>
</dbReference>
<dbReference type="PIR" id="S56187">
    <property type="entry name" value="S56187"/>
</dbReference>
<dbReference type="RefSeq" id="NP_116587.1">
    <property type="nucleotide sequence ID" value="NM_001179899.1"/>
</dbReference>
<dbReference type="BioGRID" id="31080">
    <property type="interactions" value="4"/>
</dbReference>
<dbReference type="FunCoup" id="P0CY01">
    <property type="interactions" value="54"/>
</dbReference>
<dbReference type="EnsemblFungi" id="YFL068W_mRNA">
    <property type="protein sequence ID" value="YFL068W"/>
    <property type="gene ID" value="YFL068W"/>
</dbReference>
<dbReference type="EnsemblFungi" id="YLL066W-A_mRNA">
    <property type="protein sequence ID" value="YLL066W-A"/>
    <property type="gene ID" value="YLL066W-A"/>
</dbReference>
<dbReference type="EnsemblFungi" id="YLL067W-A_mRNA">
    <property type="protein sequence ID" value="YLL067W-A"/>
    <property type="gene ID" value="YLL067W-A"/>
</dbReference>
<dbReference type="KEGG" id="sce:YFL068W"/>
<dbReference type="AGR" id="SGD:S000028673"/>
<dbReference type="SGD" id="S000028673">
    <property type="gene designation" value="YLL067W-A"/>
</dbReference>
<dbReference type="VEuPathDB" id="FungiDB:YFL068W"/>
<dbReference type="GeneTree" id="ENSGT01120000273402"/>
<dbReference type="HOGENOM" id="CLU_139933_0_0_1"/>
<dbReference type="InParanoid" id="P0CY01"/>
<dbReference type="PRO" id="PR:P0CY01"/>
<dbReference type="Proteomes" id="UP000002311">
    <property type="component" value="Chromosome XII"/>
</dbReference>
<dbReference type="RNAct" id="P0CY01">
    <property type="molecule type" value="protein"/>
</dbReference>
<dbReference type="ExpressionAtlas" id="P0CY01">
    <property type="expression patterns" value="baseline"/>
</dbReference>
<dbReference type="GO" id="GO:0016020">
    <property type="term" value="C:membrane"/>
    <property type="evidence" value="ECO:0007669"/>
    <property type="project" value="UniProtKB-SubCell"/>
</dbReference>